<accession>Q2FRT7</accession>
<protein>
    <recommendedName>
        <fullName evidence="1">Energy-coupling factor transporter ATP-binding protein EcfA2</fullName>
        <shortName evidence="1">ECF transporter A component EcfA2</shortName>
        <ecNumber evidence="1">7.-.-.-</ecNumber>
    </recommendedName>
</protein>
<feature type="chain" id="PRO_0000288023" description="Energy-coupling factor transporter ATP-binding protein EcfA2">
    <location>
        <begin position="1"/>
        <end position="398"/>
    </location>
</feature>
<feature type="domain" description="ABC transporter" evidence="1">
    <location>
        <begin position="5"/>
        <end position="240"/>
    </location>
</feature>
<feature type="binding site" evidence="1">
    <location>
        <begin position="38"/>
        <end position="45"/>
    </location>
    <ligand>
        <name>ATP</name>
        <dbReference type="ChEBI" id="CHEBI:30616"/>
    </ligand>
</feature>
<evidence type="ECO:0000255" key="1">
    <source>
        <dbReference type="HAMAP-Rule" id="MF_01710"/>
    </source>
</evidence>
<comment type="function">
    <text evidence="1">ATP-binding (A) component of a common energy-coupling factor (ECF) ABC-transporter complex. Unlike classic ABC transporters this ECF transporter provides the energy necessary to transport a number of different substrates.</text>
</comment>
<comment type="subunit">
    <text evidence="1">Forms a stable energy-coupling factor (ECF) transporter complex composed of 2 membrane-embedded substrate-binding proteins (S component), 2 ATP-binding proteins (A component) and 2 transmembrane proteins (T component).</text>
</comment>
<comment type="subcellular location">
    <subcellularLocation>
        <location evidence="1">Cell membrane</location>
        <topology evidence="1">Peripheral membrane protein</topology>
    </subcellularLocation>
</comment>
<comment type="similarity">
    <text evidence="1">Belongs to the ABC transporter superfamily. Energy-coupling factor EcfA family.</text>
</comment>
<sequence>MEPLIELKDLEYAYPYASPALSNISLCIQRGEKIALVGSNGAGKSTLLLTLNGMIRPDKGTVTIYGKPVSYDRNSLRKIRQKIGFVFQDPDVQIIAPTVWQDVAFGPVNLDYSEEQVQQAVSNALHSVGLEGFEKRPPYHLSGGEKKRVAIAGILAMDPDVLILDEPTSMLDPAGSEDIMDLLDELNHQGKTIIISTHDVELAYPWADRIILMEKGRIIASGTPEEAFSDKELVRRARLKTPILLELSQELKSRGMKTPGTLPRTVLDIIRIIEHNHHGSIRLSDNGYGTIHVGDVDLISGSHIQAILARTSCDTIGVMGSRAKICARQWGLIPDISYAVIDKCILQAMNGRTSLILTTGGMVTRVFERVSMFNQTNNRSIPVRSLIGDEIPDDLSGI</sequence>
<reference key="1">
    <citation type="journal article" date="2016" name="Stand. Genomic Sci.">
        <title>Complete genome sequence of Methanospirillum hungatei type strain JF1.</title>
        <authorList>
            <person name="Gunsalus R.P."/>
            <person name="Cook L.E."/>
            <person name="Crable B."/>
            <person name="Rohlin L."/>
            <person name="McDonald E."/>
            <person name="Mouttaki H."/>
            <person name="Sieber J.R."/>
            <person name="Poweleit N."/>
            <person name="Zhou H."/>
            <person name="Lapidus A.L."/>
            <person name="Daligault H.E."/>
            <person name="Land M."/>
            <person name="Gilna P."/>
            <person name="Ivanova N."/>
            <person name="Kyrpides N."/>
            <person name="Culley D.E."/>
            <person name="McInerney M.J."/>
        </authorList>
    </citation>
    <scope>NUCLEOTIDE SEQUENCE [LARGE SCALE GENOMIC DNA]</scope>
    <source>
        <strain>ATCC 27890 / DSM 864 / NBRC 100397 / JF-1</strain>
    </source>
</reference>
<proteinExistence type="inferred from homology"/>
<organism>
    <name type="scientific">Methanospirillum hungatei JF-1 (strain ATCC 27890 / DSM 864 / NBRC 100397 / JF-1)</name>
    <dbReference type="NCBI Taxonomy" id="323259"/>
    <lineage>
        <taxon>Archaea</taxon>
        <taxon>Methanobacteriati</taxon>
        <taxon>Methanobacteriota</taxon>
        <taxon>Stenosarchaea group</taxon>
        <taxon>Methanomicrobia</taxon>
        <taxon>Methanomicrobiales</taxon>
        <taxon>Methanospirillaceae</taxon>
        <taxon>Methanospirillum</taxon>
    </lineage>
</organism>
<gene>
    <name evidence="1" type="primary">ecfA2</name>
    <name type="synonym">cbiO2</name>
    <name type="ordered locus">Mhun_3208</name>
</gene>
<keyword id="KW-0067">ATP-binding</keyword>
<keyword id="KW-1003">Cell membrane</keyword>
<keyword id="KW-0472">Membrane</keyword>
<keyword id="KW-0547">Nucleotide-binding</keyword>
<keyword id="KW-1185">Reference proteome</keyword>
<keyword id="KW-1278">Translocase</keyword>
<keyword id="KW-0813">Transport</keyword>
<dbReference type="EC" id="7.-.-.-" evidence="1"/>
<dbReference type="EMBL" id="CP000254">
    <property type="protein sequence ID" value="ABD42890.1"/>
    <property type="molecule type" value="Genomic_DNA"/>
</dbReference>
<dbReference type="RefSeq" id="WP_011450135.1">
    <property type="nucleotide sequence ID" value="NC_007796.1"/>
</dbReference>
<dbReference type="SMR" id="Q2FRT7"/>
<dbReference type="STRING" id="323259.Mhun_3208"/>
<dbReference type="EnsemblBacteria" id="ABD42890">
    <property type="protein sequence ID" value="ABD42890"/>
    <property type="gene ID" value="Mhun_3208"/>
</dbReference>
<dbReference type="GeneID" id="3924921"/>
<dbReference type="KEGG" id="mhu:Mhun_3208"/>
<dbReference type="eggNOG" id="arCOG00203">
    <property type="taxonomic scope" value="Archaea"/>
</dbReference>
<dbReference type="HOGENOM" id="CLU_000604_13_2_2"/>
<dbReference type="InParanoid" id="Q2FRT7"/>
<dbReference type="OrthoDB" id="18209at2157"/>
<dbReference type="Proteomes" id="UP000001941">
    <property type="component" value="Chromosome"/>
</dbReference>
<dbReference type="GO" id="GO:0043190">
    <property type="term" value="C:ATP-binding cassette (ABC) transporter complex"/>
    <property type="evidence" value="ECO:0007669"/>
    <property type="project" value="TreeGrafter"/>
</dbReference>
<dbReference type="GO" id="GO:0005524">
    <property type="term" value="F:ATP binding"/>
    <property type="evidence" value="ECO:0007669"/>
    <property type="project" value="UniProtKB-KW"/>
</dbReference>
<dbReference type="GO" id="GO:0016887">
    <property type="term" value="F:ATP hydrolysis activity"/>
    <property type="evidence" value="ECO:0007669"/>
    <property type="project" value="InterPro"/>
</dbReference>
<dbReference type="GO" id="GO:0042626">
    <property type="term" value="F:ATPase-coupled transmembrane transporter activity"/>
    <property type="evidence" value="ECO:0007669"/>
    <property type="project" value="TreeGrafter"/>
</dbReference>
<dbReference type="GO" id="GO:0006824">
    <property type="term" value="P:cobalt ion transport"/>
    <property type="evidence" value="ECO:0007669"/>
    <property type="project" value="InterPro"/>
</dbReference>
<dbReference type="CDD" id="cd03225">
    <property type="entry name" value="ABC_cobalt_CbiO_domain1"/>
    <property type="match status" value="1"/>
</dbReference>
<dbReference type="FunFam" id="3.40.50.300:FF:000224">
    <property type="entry name" value="Energy-coupling factor transporter ATP-binding protein EcfA"/>
    <property type="match status" value="1"/>
</dbReference>
<dbReference type="Gene3D" id="3.40.50.300">
    <property type="entry name" value="P-loop containing nucleotide triphosphate hydrolases"/>
    <property type="match status" value="1"/>
</dbReference>
<dbReference type="InterPro" id="IPR003593">
    <property type="entry name" value="AAA+_ATPase"/>
</dbReference>
<dbReference type="InterPro" id="IPR003439">
    <property type="entry name" value="ABC_transporter-like_ATP-bd"/>
</dbReference>
<dbReference type="InterPro" id="IPR017871">
    <property type="entry name" value="ABC_transporter-like_CS"/>
</dbReference>
<dbReference type="InterPro" id="IPR015856">
    <property type="entry name" value="ABC_transpr_CbiO/EcfA_su"/>
</dbReference>
<dbReference type="InterPro" id="IPR005876">
    <property type="entry name" value="Co_trans_ATP-bd"/>
</dbReference>
<dbReference type="InterPro" id="IPR050095">
    <property type="entry name" value="ECF_ABC_transporter_ATP-bd"/>
</dbReference>
<dbReference type="InterPro" id="IPR027417">
    <property type="entry name" value="P-loop_NTPase"/>
</dbReference>
<dbReference type="NCBIfam" id="TIGR01166">
    <property type="entry name" value="cbiO"/>
    <property type="match status" value="1"/>
</dbReference>
<dbReference type="PANTHER" id="PTHR43553:SF24">
    <property type="entry name" value="ENERGY-COUPLING FACTOR TRANSPORTER ATP-BINDING PROTEIN ECFA1"/>
    <property type="match status" value="1"/>
</dbReference>
<dbReference type="PANTHER" id="PTHR43553">
    <property type="entry name" value="HEAVY METAL TRANSPORTER"/>
    <property type="match status" value="1"/>
</dbReference>
<dbReference type="Pfam" id="PF00005">
    <property type="entry name" value="ABC_tran"/>
    <property type="match status" value="1"/>
</dbReference>
<dbReference type="SMART" id="SM00382">
    <property type="entry name" value="AAA"/>
    <property type="match status" value="1"/>
</dbReference>
<dbReference type="SUPFAM" id="SSF52540">
    <property type="entry name" value="P-loop containing nucleoside triphosphate hydrolases"/>
    <property type="match status" value="1"/>
</dbReference>
<dbReference type="PROSITE" id="PS00211">
    <property type="entry name" value="ABC_TRANSPORTER_1"/>
    <property type="match status" value="1"/>
</dbReference>
<dbReference type="PROSITE" id="PS50893">
    <property type="entry name" value="ABC_TRANSPORTER_2"/>
    <property type="match status" value="1"/>
</dbReference>
<dbReference type="PROSITE" id="PS51246">
    <property type="entry name" value="CBIO"/>
    <property type="match status" value="1"/>
</dbReference>
<name>ECFA2_METHJ</name>